<sequence>MQLNSTEISELIKQRIAQFNVVSEAHNEGTIVSVSDGIIRVHGLADVMQGEMIALPGNRYAIALNLERDSVGAVVMGPYADLAEGMKVKCTGRILEVPVGRGLLGRVVNTLGEPIDGKGSIENDGFSAVEAIAPGVIERQSVDEPVQTGYKSVDAMIPIGRGQRELIIGDRQTGKTALAIDAIINQRDSGIKCVYVAIGQKASTVANVVRKLEEHDALANTIVVVATASESAALQYLAPYSGCAMGEYFRDRGEDALIIYDDLSKQAVAYRQISLLLRRPPGREAYPGDVFYLHSRLLERAARVNAEYVEAFTKGEVKGKTGSLTALPIIETQAGDVSAFVPTNVISITDGQIFLESSLFNAGIRPAVNPGISVSRVGGAAQTKIMKKLSGGIRTALAQYRELAAFSQFASDLDDATRKQLSHGQKVTELLKQKQYAPMSVAQQSLVLFAAERGYLGDVELAKVGSFEAALLAFADREHAELLQQINQTGAYNDEIEAKLKGILDTFKATQSW</sequence>
<reference key="1">
    <citation type="journal article" date="2001" name="Nature">
        <title>Genome sequence of Yersinia pestis, the causative agent of plague.</title>
        <authorList>
            <person name="Parkhill J."/>
            <person name="Wren B.W."/>
            <person name="Thomson N.R."/>
            <person name="Titball R.W."/>
            <person name="Holden M.T.G."/>
            <person name="Prentice M.B."/>
            <person name="Sebaihia M."/>
            <person name="James K.D."/>
            <person name="Churcher C.M."/>
            <person name="Mungall K.L."/>
            <person name="Baker S."/>
            <person name="Basham D."/>
            <person name="Bentley S.D."/>
            <person name="Brooks K."/>
            <person name="Cerdeno-Tarraga A.-M."/>
            <person name="Chillingworth T."/>
            <person name="Cronin A."/>
            <person name="Davies R.M."/>
            <person name="Davis P."/>
            <person name="Dougan G."/>
            <person name="Feltwell T."/>
            <person name="Hamlin N."/>
            <person name="Holroyd S."/>
            <person name="Jagels K."/>
            <person name="Karlyshev A.V."/>
            <person name="Leather S."/>
            <person name="Moule S."/>
            <person name="Oyston P.C.F."/>
            <person name="Quail M.A."/>
            <person name="Rutherford K.M."/>
            <person name="Simmonds M."/>
            <person name="Skelton J."/>
            <person name="Stevens K."/>
            <person name="Whitehead S."/>
            <person name="Barrell B.G."/>
        </authorList>
    </citation>
    <scope>NUCLEOTIDE SEQUENCE [LARGE SCALE GENOMIC DNA]</scope>
    <source>
        <strain>CO-92 / Biovar Orientalis</strain>
    </source>
</reference>
<reference key="2">
    <citation type="journal article" date="2002" name="J. Bacteriol.">
        <title>Genome sequence of Yersinia pestis KIM.</title>
        <authorList>
            <person name="Deng W."/>
            <person name="Burland V."/>
            <person name="Plunkett G. III"/>
            <person name="Boutin A."/>
            <person name="Mayhew G.F."/>
            <person name="Liss P."/>
            <person name="Perna N.T."/>
            <person name="Rose D.J."/>
            <person name="Mau B."/>
            <person name="Zhou S."/>
            <person name="Schwartz D.C."/>
            <person name="Fetherston J.D."/>
            <person name="Lindler L.E."/>
            <person name="Brubaker R.R."/>
            <person name="Plano G.V."/>
            <person name="Straley S.C."/>
            <person name="McDonough K.A."/>
            <person name="Nilles M.L."/>
            <person name="Matson J.S."/>
            <person name="Blattner F.R."/>
            <person name="Perry R.D."/>
        </authorList>
    </citation>
    <scope>NUCLEOTIDE SEQUENCE [LARGE SCALE GENOMIC DNA]</scope>
    <source>
        <strain>KIM10+ / Biovar Mediaevalis</strain>
    </source>
</reference>
<reference key="3">
    <citation type="journal article" date="2004" name="DNA Res.">
        <title>Complete genome sequence of Yersinia pestis strain 91001, an isolate avirulent to humans.</title>
        <authorList>
            <person name="Song Y."/>
            <person name="Tong Z."/>
            <person name="Wang J."/>
            <person name="Wang L."/>
            <person name="Guo Z."/>
            <person name="Han Y."/>
            <person name="Zhang J."/>
            <person name="Pei D."/>
            <person name="Zhou D."/>
            <person name="Qin H."/>
            <person name="Pang X."/>
            <person name="Han Y."/>
            <person name="Zhai J."/>
            <person name="Li M."/>
            <person name="Cui B."/>
            <person name="Qi Z."/>
            <person name="Jin L."/>
            <person name="Dai R."/>
            <person name="Chen F."/>
            <person name="Li S."/>
            <person name="Ye C."/>
            <person name="Du Z."/>
            <person name="Lin W."/>
            <person name="Wang J."/>
            <person name="Yu J."/>
            <person name="Yang H."/>
            <person name="Wang J."/>
            <person name="Huang P."/>
            <person name="Yang R."/>
        </authorList>
    </citation>
    <scope>NUCLEOTIDE SEQUENCE [LARGE SCALE GENOMIC DNA]</scope>
    <source>
        <strain>91001 / Biovar Mediaevalis</strain>
    </source>
</reference>
<keyword id="KW-0066">ATP synthesis</keyword>
<keyword id="KW-0067">ATP-binding</keyword>
<keyword id="KW-0997">Cell inner membrane</keyword>
<keyword id="KW-1003">Cell membrane</keyword>
<keyword id="KW-0139">CF(1)</keyword>
<keyword id="KW-0375">Hydrogen ion transport</keyword>
<keyword id="KW-0406">Ion transport</keyword>
<keyword id="KW-0472">Membrane</keyword>
<keyword id="KW-0547">Nucleotide-binding</keyword>
<keyword id="KW-1185">Reference proteome</keyword>
<keyword id="KW-1278">Translocase</keyword>
<keyword id="KW-0813">Transport</keyword>
<evidence type="ECO:0000255" key="1">
    <source>
        <dbReference type="HAMAP-Rule" id="MF_01346"/>
    </source>
</evidence>
<name>ATPA_YERPE</name>
<dbReference type="EC" id="7.1.2.2" evidence="1"/>
<dbReference type="EMBL" id="AL590842">
    <property type="protein sequence ID" value="CAL22691.1"/>
    <property type="molecule type" value="Genomic_DNA"/>
</dbReference>
<dbReference type="EMBL" id="AE009952">
    <property type="protein sequence ID" value="AAM87679.1"/>
    <property type="molecule type" value="Genomic_DNA"/>
</dbReference>
<dbReference type="EMBL" id="AE017042">
    <property type="protein sequence ID" value="AAS64169.1"/>
    <property type="molecule type" value="Genomic_DNA"/>
</dbReference>
<dbReference type="PIR" id="AG0500">
    <property type="entry name" value="AG0500"/>
</dbReference>
<dbReference type="RefSeq" id="WP_002220758.1">
    <property type="nucleotide sequence ID" value="NZ_WUCM01000028.1"/>
</dbReference>
<dbReference type="RefSeq" id="YP_002348974.1">
    <property type="nucleotide sequence ID" value="NC_003143.1"/>
</dbReference>
<dbReference type="SMR" id="Q8Z9S4"/>
<dbReference type="STRING" id="214092.YPO4123"/>
<dbReference type="PaxDb" id="214092-YPO4123"/>
<dbReference type="DNASU" id="1149084"/>
<dbReference type="EnsemblBacteria" id="AAS64169">
    <property type="protein sequence ID" value="AAS64169"/>
    <property type="gene ID" value="YP_4030"/>
</dbReference>
<dbReference type="GeneID" id="96663461"/>
<dbReference type="KEGG" id="ype:YPO4123"/>
<dbReference type="KEGG" id="ypk:y4137"/>
<dbReference type="KEGG" id="ypm:YP_4030"/>
<dbReference type="PATRIC" id="fig|214092.21.peg.4667"/>
<dbReference type="eggNOG" id="COG0056">
    <property type="taxonomic scope" value="Bacteria"/>
</dbReference>
<dbReference type="HOGENOM" id="CLU_010091_2_1_6"/>
<dbReference type="OMA" id="INQRDNW"/>
<dbReference type="OrthoDB" id="9803053at2"/>
<dbReference type="Proteomes" id="UP000000815">
    <property type="component" value="Chromosome"/>
</dbReference>
<dbReference type="Proteomes" id="UP000001019">
    <property type="component" value="Chromosome"/>
</dbReference>
<dbReference type="Proteomes" id="UP000002490">
    <property type="component" value="Chromosome"/>
</dbReference>
<dbReference type="GO" id="GO:0005886">
    <property type="term" value="C:plasma membrane"/>
    <property type="evidence" value="ECO:0007669"/>
    <property type="project" value="UniProtKB-SubCell"/>
</dbReference>
<dbReference type="GO" id="GO:0045259">
    <property type="term" value="C:proton-transporting ATP synthase complex"/>
    <property type="evidence" value="ECO:0007669"/>
    <property type="project" value="UniProtKB-KW"/>
</dbReference>
<dbReference type="GO" id="GO:0043531">
    <property type="term" value="F:ADP binding"/>
    <property type="evidence" value="ECO:0000318"/>
    <property type="project" value="GO_Central"/>
</dbReference>
<dbReference type="GO" id="GO:0005524">
    <property type="term" value="F:ATP binding"/>
    <property type="evidence" value="ECO:0000318"/>
    <property type="project" value="GO_Central"/>
</dbReference>
<dbReference type="GO" id="GO:0046933">
    <property type="term" value="F:proton-transporting ATP synthase activity, rotational mechanism"/>
    <property type="evidence" value="ECO:0007669"/>
    <property type="project" value="UniProtKB-UniRule"/>
</dbReference>
<dbReference type="GO" id="GO:0015986">
    <property type="term" value="P:proton motive force-driven ATP synthesis"/>
    <property type="evidence" value="ECO:0000318"/>
    <property type="project" value="GO_Central"/>
</dbReference>
<dbReference type="CDD" id="cd18113">
    <property type="entry name" value="ATP-synt_F1_alpha_C"/>
    <property type="match status" value="1"/>
</dbReference>
<dbReference type="CDD" id="cd18116">
    <property type="entry name" value="ATP-synt_F1_alpha_N"/>
    <property type="match status" value="1"/>
</dbReference>
<dbReference type="CDD" id="cd01132">
    <property type="entry name" value="F1-ATPase_alpha_CD"/>
    <property type="match status" value="1"/>
</dbReference>
<dbReference type="FunFam" id="1.20.150.20:FF:000001">
    <property type="entry name" value="ATP synthase subunit alpha"/>
    <property type="match status" value="1"/>
</dbReference>
<dbReference type="FunFam" id="2.40.30.20:FF:000001">
    <property type="entry name" value="ATP synthase subunit alpha"/>
    <property type="match status" value="1"/>
</dbReference>
<dbReference type="FunFam" id="3.40.50.300:FF:000002">
    <property type="entry name" value="ATP synthase subunit alpha"/>
    <property type="match status" value="1"/>
</dbReference>
<dbReference type="Gene3D" id="2.40.30.20">
    <property type="match status" value="1"/>
</dbReference>
<dbReference type="Gene3D" id="1.20.150.20">
    <property type="entry name" value="ATP synthase alpha/beta chain, C-terminal domain"/>
    <property type="match status" value="1"/>
</dbReference>
<dbReference type="Gene3D" id="3.40.50.300">
    <property type="entry name" value="P-loop containing nucleotide triphosphate hydrolases"/>
    <property type="match status" value="1"/>
</dbReference>
<dbReference type="HAMAP" id="MF_01346">
    <property type="entry name" value="ATP_synth_alpha_bact"/>
    <property type="match status" value="1"/>
</dbReference>
<dbReference type="InterPro" id="IPR023366">
    <property type="entry name" value="ATP_synth_asu-like_sf"/>
</dbReference>
<dbReference type="InterPro" id="IPR000793">
    <property type="entry name" value="ATP_synth_asu_C"/>
</dbReference>
<dbReference type="InterPro" id="IPR038376">
    <property type="entry name" value="ATP_synth_asu_C_sf"/>
</dbReference>
<dbReference type="InterPro" id="IPR033732">
    <property type="entry name" value="ATP_synth_F1_a_nt-bd_dom"/>
</dbReference>
<dbReference type="InterPro" id="IPR005294">
    <property type="entry name" value="ATP_synth_F1_asu"/>
</dbReference>
<dbReference type="InterPro" id="IPR020003">
    <property type="entry name" value="ATPase_a/bsu_AS"/>
</dbReference>
<dbReference type="InterPro" id="IPR004100">
    <property type="entry name" value="ATPase_F1/V1/A1_a/bsu_N"/>
</dbReference>
<dbReference type="InterPro" id="IPR036121">
    <property type="entry name" value="ATPase_F1/V1/A1_a/bsu_N_sf"/>
</dbReference>
<dbReference type="InterPro" id="IPR000194">
    <property type="entry name" value="ATPase_F1/V1/A1_a/bsu_nucl-bd"/>
</dbReference>
<dbReference type="InterPro" id="IPR027417">
    <property type="entry name" value="P-loop_NTPase"/>
</dbReference>
<dbReference type="NCBIfam" id="TIGR00962">
    <property type="entry name" value="atpA"/>
    <property type="match status" value="1"/>
</dbReference>
<dbReference type="NCBIfam" id="NF009884">
    <property type="entry name" value="PRK13343.1"/>
    <property type="match status" value="1"/>
</dbReference>
<dbReference type="PANTHER" id="PTHR48082">
    <property type="entry name" value="ATP SYNTHASE SUBUNIT ALPHA, MITOCHONDRIAL"/>
    <property type="match status" value="1"/>
</dbReference>
<dbReference type="PANTHER" id="PTHR48082:SF2">
    <property type="entry name" value="ATP SYNTHASE SUBUNIT ALPHA, MITOCHONDRIAL"/>
    <property type="match status" value="1"/>
</dbReference>
<dbReference type="Pfam" id="PF00006">
    <property type="entry name" value="ATP-synt_ab"/>
    <property type="match status" value="1"/>
</dbReference>
<dbReference type="Pfam" id="PF00306">
    <property type="entry name" value="ATP-synt_ab_C"/>
    <property type="match status" value="1"/>
</dbReference>
<dbReference type="Pfam" id="PF02874">
    <property type="entry name" value="ATP-synt_ab_N"/>
    <property type="match status" value="1"/>
</dbReference>
<dbReference type="SUPFAM" id="SSF47917">
    <property type="entry name" value="C-terminal domain of alpha and beta subunits of F1 ATP synthase"/>
    <property type="match status" value="1"/>
</dbReference>
<dbReference type="SUPFAM" id="SSF50615">
    <property type="entry name" value="N-terminal domain of alpha and beta subunits of F1 ATP synthase"/>
    <property type="match status" value="1"/>
</dbReference>
<dbReference type="SUPFAM" id="SSF52540">
    <property type="entry name" value="P-loop containing nucleoside triphosphate hydrolases"/>
    <property type="match status" value="1"/>
</dbReference>
<dbReference type="PROSITE" id="PS00152">
    <property type="entry name" value="ATPASE_ALPHA_BETA"/>
    <property type="match status" value="1"/>
</dbReference>
<feature type="chain" id="PRO_0000238410" description="ATP synthase subunit alpha">
    <location>
        <begin position="1"/>
        <end position="513"/>
    </location>
</feature>
<feature type="binding site" evidence="1">
    <location>
        <begin position="169"/>
        <end position="176"/>
    </location>
    <ligand>
        <name>ATP</name>
        <dbReference type="ChEBI" id="CHEBI:30616"/>
    </ligand>
</feature>
<feature type="site" description="Required for activity" evidence="1">
    <location>
        <position position="373"/>
    </location>
</feature>
<proteinExistence type="inferred from homology"/>
<accession>Q8Z9S4</accession>
<accession>Q0W9R4</accession>
<accession>Q74P99</accession>
<accession>Q7CFM6</accession>
<organism>
    <name type="scientific">Yersinia pestis</name>
    <dbReference type="NCBI Taxonomy" id="632"/>
    <lineage>
        <taxon>Bacteria</taxon>
        <taxon>Pseudomonadati</taxon>
        <taxon>Pseudomonadota</taxon>
        <taxon>Gammaproteobacteria</taxon>
        <taxon>Enterobacterales</taxon>
        <taxon>Yersiniaceae</taxon>
        <taxon>Yersinia</taxon>
    </lineage>
</organism>
<protein>
    <recommendedName>
        <fullName evidence="1">ATP synthase subunit alpha</fullName>
        <ecNumber evidence="1">7.1.2.2</ecNumber>
    </recommendedName>
    <alternativeName>
        <fullName evidence="1">ATP synthase F1 sector subunit alpha</fullName>
    </alternativeName>
    <alternativeName>
        <fullName evidence="1">F-ATPase subunit alpha</fullName>
    </alternativeName>
</protein>
<comment type="function">
    <text evidence="1">Produces ATP from ADP in the presence of a proton gradient across the membrane. The alpha chain is a regulatory subunit.</text>
</comment>
<comment type="catalytic activity">
    <reaction evidence="1">
        <text>ATP + H2O + 4 H(+)(in) = ADP + phosphate + 5 H(+)(out)</text>
        <dbReference type="Rhea" id="RHEA:57720"/>
        <dbReference type="ChEBI" id="CHEBI:15377"/>
        <dbReference type="ChEBI" id="CHEBI:15378"/>
        <dbReference type="ChEBI" id="CHEBI:30616"/>
        <dbReference type="ChEBI" id="CHEBI:43474"/>
        <dbReference type="ChEBI" id="CHEBI:456216"/>
        <dbReference type="EC" id="7.1.2.2"/>
    </reaction>
</comment>
<comment type="subunit">
    <text evidence="1">F-type ATPases have 2 components, CF(1) - the catalytic core - and CF(0) - the membrane proton channel. CF(1) has five subunits: alpha(3), beta(3), gamma(1), delta(1), epsilon(1). CF(0) has three main subunits: a(1), b(2) and c(9-12). The alpha and beta chains form an alternating ring which encloses part of the gamma chain. CF(1) is attached to CF(0) by a central stalk formed by the gamma and epsilon chains, while a peripheral stalk is formed by the delta and b chains.</text>
</comment>
<comment type="subcellular location">
    <subcellularLocation>
        <location evidence="1">Cell inner membrane</location>
        <topology evidence="1">Peripheral membrane protein</topology>
    </subcellularLocation>
</comment>
<comment type="similarity">
    <text evidence="1">Belongs to the ATPase alpha/beta chains family.</text>
</comment>
<gene>
    <name evidence="1" type="primary">atpA</name>
    <name type="ordered locus">YPO4123</name>
    <name type="ordered locus">y4137</name>
    <name type="ordered locus">YP_4030</name>
</gene>